<gene>
    <name evidence="1" type="primary">caiC</name>
    <name type="ordered locus">SPA0072</name>
</gene>
<organism>
    <name type="scientific">Salmonella paratyphi A (strain ATCC 9150 / SARB42)</name>
    <dbReference type="NCBI Taxonomy" id="295319"/>
    <lineage>
        <taxon>Bacteria</taxon>
        <taxon>Pseudomonadati</taxon>
        <taxon>Pseudomonadota</taxon>
        <taxon>Gammaproteobacteria</taxon>
        <taxon>Enterobacterales</taxon>
        <taxon>Enterobacteriaceae</taxon>
        <taxon>Salmonella</taxon>
    </lineage>
</organism>
<accession>Q5PIL0</accession>
<protein>
    <recommendedName>
        <fullName evidence="1">Crotonobetaine/carnitine--CoA ligase</fullName>
        <ecNumber evidence="1">6.2.1.48</ecNumber>
    </recommendedName>
</protein>
<feature type="chain" id="PRO_0000193070" description="Crotonobetaine/carnitine--CoA ligase">
    <location>
        <begin position="1"/>
        <end position="517"/>
    </location>
</feature>
<name>CAIC_SALPA</name>
<comment type="function">
    <text evidence="1">Catalyzes the transfer of CoA to carnitine, generating the initial carnitinyl-CoA needed for the CaiB reaction cycle. Also has activity toward crotonobetaine and gamma-butyrobetaine.</text>
</comment>
<comment type="catalytic activity">
    <reaction evidence="1">
        <text>4-(trimethylamino)butanoate + ATP + CoA = 4-(trimethylamino)butanoyl-CoA + AMP + diphosphate</text>
        <dbReference type="Rhea" id="RHEA:55960"/>
        <dbReference type="ChEBI" id="CHEBI:16244"/>
        <dbReference type="ChEBI" id="CHEBI:30616"/>
        <dbReference type="ChEBI" id="CHEBI:33019"/>
        <dbReference type="ChEBI" id="CHEBI:57287"/>
        <dbReference type="ChEBI" id="CHEBI:61513"/>
        <dbReference type="ChEBI" id="CHEBI:456215"/>
        <dbReference type="EC" id="6.2.1.48"/>
    </reaction>
</comment>
<comment type="catalytic activity">
    <reaction evidence="1">
        <text>crotonobetaine + ATP + CoA = crotonobetainyl-CoA + AMP + diphosphate</text>
        <dbReference type="Rhea" id="RHEA:30079"/>
        <dbReference type="ChEBI" id="CHEBI:17237"/>
        <dbReference type="ChEBI" id="CHEBI:30616"/>
        <dbReference type="ChEBI" id="CHEBI:33019"/>
        <dbReference type="ChEBI" id="CHEBI:57287"/>
        <dbReference type="ChEBI" id="CHEBI:60933"/>
        <dbReference type="ChEBI" id="CHEBI:456215"/>
        <dbReference type="EC" id="6.2.1.48"/>
    </reaction>
</comment>
<comment type="catalytic activity">
    <reaction evidence="1">
        <text>(R)-carnitine + ATP + CoA = (R)-carnitinyl-CoA + AMP + diphosphate</text>
        <dbReference type="Rhea" id="RHEA:28514"/>
        <dbReference type="ChEBI" id="CHEBI:16347"/>
        <dbReference type="ChEBI" id="CHEBI:30616"/>
        <dbReference type="ChEBI" id="CHEBI:33019"/>
        <dbReference type="ChEBI" id="CHEBI:57287"/>
        <dbReference type="ChEBI" id="CHEBI:60932"/>
        <dbReference type="ChEBI" id="CHEBI:456215"/>
        <dbReference type="EC" id="6.2.1.48"/>
    </reaction>
</comment>
<comment type="pathway">
    <text evidence="1">Amine and polyamine metabolism; carnitine metabolism.</text>
</comment>
<comment type="similarity">
    <text evidence="1">Belongs to the ATP-dependent AMP-binding enzyme family.</text>
</comment>
<keyword id="KW-0436">Ligase</keyword>
<dbReference type="EC" id="6.2.1.48" evidence="1"/>
<dbReference type="EMBL" id="CP000026">
    <property type="protein sequence ID" value="AAV76106.1"/>
    <property type="molecule type" value="Genomic_DNA"/>
</dbReference>
<dbReference type="RefSeq" id="WP_000355788.1">
    <property type="nucleotide sequence ID" value="NC_006511.1"/>
</dbReference>
<dbReference type="SMR" id="Q5PIL0"/>
<dbReference type="KEGG" id="spt:SPA0072"/>
<dbReference type="HOGENOM" id="CLU_000022_59_0_6"/>
<dbReference type="UniPathway" id="UPA00117"/>
<dbReference type="Proteomes" id="UP000008185">
    <property type="component" value="Chromosome"/>
</dbReference>
<dbReference type="GO" id="GO:0051108">
    <property type="term" value="F:carnitine-CoA ligase activity"/>
    <property type="evidence" value="ECO:0007669"/>
    <property type="project" value="InterPro"/>
</dbReference>
<dbReference type="GO" id="GO:0051109">
    <property type="term" value="F:crotonobetaine-CoA ligase activity"/>
    <property type="evidence" value="ECO:0007669"/>
    <property type="project" value="InterPro"/>
</dbReference>
<dbReference type="GO" id="GO:0031956">
    <property type="term" value="F:medium-chain fatty acid-CoA ligase activity"/>
    <property type="evidence" value="ECO:0007669"/>
    <property type="project" value="TreeGrafter"/>
</dbReference>
<dbReference type="GO" id="GO:0009437">
    <property type="term" value="P:carnitine metabolic process"/>
    <property type="evidence" value="ECO:0007669"/>
    <property type="project" value="UniProtKB-UniRule"/>
</dbReference>
<dbReference type="GO" id="GO:0006631">
    <property type="term" value="P:fatty acid metabolic process"/>
    <property type="evidence" value="ECO:0007669"/>
    <property type="project" value="TreeGrafter"/>
</dbReference>
<dbReference type="CDD" id="cd05934">
    <property type="entry name" value="FACL_DitJ_like"/>
    <property type="match status" value="1"/>
</dbReference>
<dbReference type="FunFam" id="3.30.300.30:FF:000011">
    <property type="entry name" value="Crotonobetaine/carnitine--CoA ligase"/>
    <property type="match status" value="1"/>
</dbReference>
<dbReference type="Gene3D" id="3.30.300.30">
    <property type="match status" value="1"/>
</dbReference>
<dbReference type="Gene3D" id="3.40.50.12780">
    <property type="entry name" value="N-terminal domain of ligase-like"/>
    <property type="match status" value="1"/>
</dbReference>
<dbReference type="HAMAP" id="MF_01524">
    <property type="entry name" value="CaiC"/>
    <property type="match status" value="1"/>
</dbReference>
<dbReference type="InterPro" id="IPR025110">
    <property type="entry name" value="AMP-bd_C"/>
</dbReference>
<dbReference type="InterPro" id="IPR045851">
    <property type="entry name" value="AMP-bd_C_sf"/>
</dbReference>
<dbReference type="InterPro" id="IPR020845">
    <property type="entry name" value="AMP-binding_CS"/>
</dbReference>
<dbReference type="InterPro" id="IPR000873">
    <property type="entry name" value="AMP-dep_synth/lig_dom"/>
</dbReference>
<dbReference type="InterPro" id="IPR042099">
    <property type="entry name" value="ANL_N_sf"/>
</dbReference>
<dbReference type="InterPro" id="IPR023456">
    <property type="entry name" value="CaiC"/>
</dbReference>
<dbReference type="NCBIfam" id="NF005947">
    <property type="entry name" value="PRK08008.1"/>
    <property type="match status" value="1"/>
</dbReference>
<dbReference type="PANTHER" id="PTHR43201">
    <property type="entry name" value="ACYL-COA SYNTHETASE"/>
    <property type="match status" value="1"/>
</dbReference>
<dbReference type="PANTHER" id="PTHR43201:SF5">
    <property type="entry name" value="MEDIUM-CHAIN ACYL-COA LIGASE ACSF2, MITOCHONDRIAL"/>
    <property type="match status" value="1"/>
</dbReference>
<dbReference type="Pfam" id="PF00501">
    <property type="entry name" value="AMP-binding"/>
    <property type="match status" value="1"/>
</dbReference>
<dbReference type="Pfam" id="PF13193">
    <property type="entry name" value="AMP-binding_C"/>
    <property type="match status" value="1"/>
</dbReference>
<dbReference type="SUPFAM" id="SSF56801">
    <property type="entry name" value="Acetyl-CoA synthetase-like"/>
    <property type="match status" value="1"/>
</dbReference>
<dbReference type="PROSITE" id="PS00455">
    <property type="entry name" value="AMP_BINDING"/>
    <property type="match status" value="1"/>
</dbReference>
<evidence type="ECO:0000255" key="1">
    <source>
        <dbReference type="HAMAP-Rule" id="MF_01524"/>
    </source>
</evidence>
<proteinExistence type="inferred from homology"/>
<reference key="1">
    <citation type="journal article" date="2004" name="Nat. Genet.">
        <title>Comparison of genome degradation in Paratyphi A and Typhi, human-restricted serovars of Salmonella enterica that cause typhoid.</title>
        <authorList>
            <person name="McClelland M."/>
            <person name="Sanderson K.E."/>
            <person name="Clifton S.W."/>
            <person name="Latreille P."/>
            <person name="Porwollik S."/>
            <person name="Sabo A."/>
            <person name="Meyer R."/>
            <person name="Bieri T."/>
            <person name="Ozersky P."/>
            <person name="McLellan M."/>
            <person name="Harkins C.R."/>
            <person name="Wang C."/>
            <person name="Nguyen C."/>
            <person name="Berghoff A."/>
            <person name="Elliott G."/>
            <person name="Kohlberg S."/>
            <person name="Strong C."/>
            <person name="Du F."/>
            <person name="Carter J."/>
            <person name="Kremizki C."/>
            <person name="Layman D."/>
            <person name="Leonard S."/>
            <person name="Sun H."/>
            <person name="Fulton L."/>
            <person name="Nash W."/>
            <person name="Miner T."/>
            <person name="Minx P."/>
            <person name="Delehaunty K."/>
            <person name="Fronick C."/>
            <person name="Magrini V."/>
            <person name="Nhan M."/>
            <person name="Warren W."/>
            <person name="Florea L."/>
            <person name="Spieth J."/>
            <person name="Wilson R.K."/>
        </authorList>
    </citation>
    <scope>NUCLEOTIDE SEQUENCE [LARGE SCALE GENOMIC DNA]</scope>
    <source>
        <strain>ATCC 9150 / SARB42</strain>
    </source>
</reference>
<sequence length="517" mass="58248">MDIVGGQNLRQMWDDLAEVYGDKTALIFESCEGIVRQFSYASLNEEINRTANLFHSLGIRKGDRVALHLDNCPEFIFCWFGLAKIGAIMVPINARLLGEESAWILQNSQVSLLVTSAQFYPMYREIRQGNSTPLNHICLIGEQLPADDGVSLFSQLQARQSATLCYTPALSTDDAAEILFTSGTTSRPKGVVITHYNLRFAGYYSAWQIALRDDDVYMTVMPAFHIDCQCTAAMPAFSAGSTFVLLEKYSARAFWGQVRKYQATVTECIPMMIRTLMVQPAAPTDRQHHLREVMFYLNLSAQEKDAFTERFGVRLLTSYGMTETIVGIIGDRPGDKRRWPSIGRVGFSYEAEIRDDQNRPLPAGEIGEICIKGIPGKTIFKEYYMQPEATARALEPEGWLHTGDSGYQDEDGYFYFVDRRCNMIKRGGENVSCVELENIISAHPKIQDIVVVGIKDAIRDEAIKAFIVLNEGETLSEAEFFSFCENNMAKFKVPSFMEIRTDLPRNCSGKIIKKNLK</sequence>